<proteinExistence type="evidence at protein level"/>
<keyword id="KW-0051">Antiviral defense</keyword>
<keyword id="KW-0963">Cytoplasm</keyword>
<keyword id="KW-0903">Direct protein sequencing</keyword>
<keyword id="KW-0256">Endoplasmic reticulum</keyword>
<keyword id="KW-0342">GTP-binding</keyword>
<keyword id="KW-0391">Immunity</keyword>
<keyword id="KW-0399">Innate immunity</keyword>
<keyword id="KW-0472">Membrane</keyword>
<keyword id="KW-0547">Nucleotide-binding</keyword>
<keyword id="KW-0539">Nucleus</keyword>
<keyword id="KW-1185">Reference proteome</keyword>
<keyword id="KW-0832">Ubl conjugation</keyword>
<reference key="1">
    <citation type="journal article" date="1990" name="J. Virol.">
        <title>Activity of rat Mx proteins against a rhabdovirus.</title>
        <authorList>
            <person name="Meier E."/>
            <person name="Kunz G."/>
            <person name="Haller O."/>
            <person name="Arnheiter H."/>
        </authorList>
    </citation>
    <scope>NUCLEOTIDE SEQUENCE [MRNA]</scope>
    <scope>SUBCELLULAR LOCATION</scope>
</reference>
<reference key="2">
    <citation type="submission" date="2006-11" db="UniProtKB">
        <authorList>
            <person name="Lubec G."/>
            <person name="Afjehi-Sadat L."/>
        </authorList>
    </citation>
    <scope>PROTEIN SEQUENCE OF 148-175</scope>
    <scope>IDENTIFICATION BY MASS SPECTROMETRY</scope>
    <source>
        <strain>Sprague-Dawley</strain>
        <tissue>Spinal cord</tissue>
    </source>
</reference>
<reference key="3">
    <citation type="journal article" date="2007" name="Microbes Infect.">
        <title>The Mx GTPase family of interferon-induced antiviral proteins.</title>
        <authorList>
            <person name="Haller O."/>
            <person name="Stertz S."/>
            <person name="Kochs G."/>
        </authorList>
    </citation>
    <scope>REVIEW</scope>
    <scope>INDUCTION</scope>
</reference>
<dbReference type="EMBL" id="X52711">
    <property type="protein sequence ID" value="CAA36935.1"/>
    <property type="molecule type" value="mRNA"/>
</dbReference>
<dbReference type="PIR" id="S11735">
    <property type="entry name" value="S11735"/>
</dbReference>
<dbReference type="SMR" id="P18588"/>
<dbReference type="STRING" id="10116.ENSRNOP00000043001"/>
<dbReference type="PhosphoSitePlus" id="P18588"/>
<dbReference type="PaxDb" id="10116-ENSRNOP00000043001"/>
<dbReference type="UCSC" id="RGD:3127">
    <property type="organism name" value="rat"/>
</dbReference>
<dbReference type="AGR" id="RGD:3127"/>
<dbReference type="RGD" id="3127">
    <property type="gene designation" value="Mx1"/>
</dbReference>
<dbReference type="eggNOG" id="KOG0446">
    <property type="taxonomic scope" value="Eukaryota"/>
</dbReference>
<dbReference type="InParanoid" id="P18588"/>
<dbReference type="OrthoDB" id="5061070at2759"/>
<dbReference type="PhylomeDB" id="P18588"/>
<dbReference type="PRO" id="PR:P18588"/>
<dbReference type="Proteomes" id="UP000002494">
    <property type="component" value="Unplaced"/>
</dbReference>
<dbReference type="GO" id="GO:0005737">
    <property type="term" value="C:cytoplasm"/>
    <property type="evidence" value="ECO:0000266"/>
    <property type="project" value="RGD"/>
</dbReference>
<dbReference type="GO" id="GO:0005789">
    <property type="term" value="C:endoplasmic reticulum membrane"/>
    <property type="evidence" value="ECO:0007669"/>
    <property type="project" value="UniProtKB-SubCell"/>
</dbReference>
<dbReference type="GO" id="GO:0005874">
    <property type="term" value="C:microtubule"/>
    <property type="evidence" value="ECO:0000318"/>
    <property type="project" value="GO_Central"/>
</dbReference>
<dbReference type="GO" id="GO:0005634">
    <property type="term" value="C:nucleus"/>
    <property type="evidence" value="ECO:0000314"/>
    <property type="project" value="UniProtKB"/>
</dbReference>
<dbReference type="GO" id="GO:0048471">
    <property type="term" value="C:perinuclear region of cytoplasm"/>
    <property type="evidence" value="ECO:0000266"/>
    <property type="project" value="RGD"/>
</dbReference>
<dbReference type="GO" id="GO:0005886">
    <property type="term" value="C:plasma membrane"/>
    <property type="evidence" value="ECO:0000318"/>
    <property type="project" value="GO_Central"/>
</dbReference>
<dbReference type="GO" id="GO:0098793">
    <property type="term" value="C:presynapse"/>
    <property type="evidence" value="ECO:0007669"/>
    <property type="project" value="GOC"/>
</dbReference>
<dbReference type="GO" id="GO:0045202">
    <property type="term" value="C:synapse"/>
    <property type="evidence" value="ECO:0000318"/>
    <property type="project" value="GO_Central"/>
</dbReference>
<dbReference type="GO" id="GO:0005525">
    <property type="term" value="F:GTP binding"/>
    <property type="evidence" value="ECO:0007669"/>
    <property type="project" value="UniProtKB-KW"/>
</dbReference>
<dbReference type="GO" id="GO:0003924">
    <property type="term" value="F:GTPase activity"/>
    <property type="evidence" value="ECO:0000318"/>
    <property type="project" value="GO_Central"/>
</dbReference>
<dbReference type="GO" id="GO:0042802">
    <property type="term" value="F:identical protein binding"/>
    <property type="evidence" value="ECO:0000266"/>
    <property type="project" value="RGD"/>
</dbReference>
<dbReference type="GO" id="GO:0008017">
    <property type="term" value="F:microtubule binding"/>
    <property type="evidence" value="ECO:0000318"/>
    <property type="project" value="GO_Central"/>
</dbReference>
<dbReference type="GO" id="GO:0051607">
    <property type="term" value="P:defense response to virus"/>
    <property type="evidence" value="ECO:0000318"/>
    <property type="project" value="GO_Central"/>
</dbReference>
<dbReference type="GO" id="GO:0045087">
    <property type="term" value="P:innate immune response"/>
    <property type="evidence" value="ECO:0000250"/>
    <property type="project" value="UniProtKB"/>
</dbReference>
<dbReference type="GO" id="GO:0070106">
    <property type="term" value="P:interleukin-27-mediated signaling pathway"/>
    <property type="evidence" value="ECO:0000266"/>
    <property type="project" value="RGD"/>
</dbReference>
<dbReference type="GO" id="GO:0045071">
    <property type="term" value="P:negative regulation of viral genome replication"/>
    <property type="evidence" value="ECO:0000266"/>
    <property type="project" value="RGD"/>
</dbReference>
<dbReference type="GO" id="GO:0031623">
    <property type="term" value="P:receptor internalization"/>
    <property type="evidence" value="ECO:0000318"/>
    <property type="project" value="GO_Central"/>
</dbReference>
<dbReference type="GO" id="GO:0009615">
    <property type="term" value="P:response to virus"/>
    <property type="evidence" value="ECO:0000314"/>
    <property type="project" value="UniProtKB"/>
</dbReference>
<dbReference type="GO" id="GO:0016185">
    <property type="term" value="P:synaptic vesicle budding from presynaptic endocytic zone membrane"/>
    <property type="evidence" value="ECO:0000318"/>
    <property type="project" value="GO_Central"/>
</dbReference>
<dbReference type="CDD" id="cd08771">
    <property type="entry name" value="DLP_1"/>
    <property type="match status" value="1"/>
</dbReference>
<dbReference type="FunFam" id="1.20.120.1240:FF:000007">
    <property type="entry name" value="Interferon-induced GTP-binding protein Mx1"/>
    <property type="match status" value="1"/>
</dbReference>
<dbReference type="FunFam" id="3.40.50.300:FF:000621">
    <property type="entry name" value="Interferon-induced GTP-binding protein Mx1"/>
    <property type="match status" value="1"/>
</dbReference>
<dbReference type="Gene3D" id="1.20.120.1240">
    <property type="entry name" value="Dynamin, middle domain"/>
    <property type="match status" value="1"/>
</dbReference>
<dbReference type="Gene3D" id="3.40.50.300">
    <property type="entry name" value="P-loop containing nucleotide triphosphate hydrolases"/>
    <property type="match status" value="1"/>
</dbReference>
<dbReference type="InterPro" id="IPR022812">
    <property type="entry name" value="Dynamin"/>
</dbReference>
<dbReference type="InterPro" id="IPR001401">
    <property type="entry name" value="Dynamin_GTPase"/>
</dbReference>
<dbReference type="InterPro" id="IPR019762">
    <property type="entry name" value="Dynamin_GTPase_CS"/>
</dbReference>
<dbReference type="InterPro" id="IPR045063">
    <property type="entry name" value="Dynamin_N"/>
</dbReference>
<dbReference type="InterPro" id="IPR000375">
    <property type="entry name" value="Dynamin_stalk"/>
</dbReference>
<dbReference type="InterPro" id="IPR030381">
    <property type="entry name" value="G_DYNAMIN_dom"/>
</dbReference>
<dbReference type="InterPro" id="IPR003130">
    <property type="entry name" value="GED"/>
</dbReference>
<dbReference type="InterPro" id="IPR020850">
    <property type="entry name" value="GED_dom"/>
</dbReference>
<dbReference type="InterPro" id="IPR027417">
    <property type="entry name" value="P-loop_NTPase"/>
</dbReference>
<dbReference type="PANTHER" id="PTHR11566">
    <property type="entry name" value="DYNAMIN"/>
    <property type="match status" value="1"/>
</dbReference>
<dbReference type="PANTHER" id="PTHR11566:SF217">
    <property type="entry name" value="INTERFERON-INDUCED GTP-BINDING PROTEIN MX1"/>
    <property type="match status" value="1"/>
</dbReference>
<dbReference type="Pfam" id="PF01031">
    <property type="entry name" value="Dynamin_M"/>
    <property type="match status" value="1"/>
</dbReference>
<dbReference type="Pfam" id="PF00350">
    <property type="entry name" value="Dynamin_N"/>
    <property type="match status" value="1"/>
</dbReference>
<dbReference type="Pfam" id="PF02212">
    <property type="entry name" value="GED"/>
    <property type="match status" value="1"/>
</dbReference>
<dbReference type="PRINTS" id="PR00195">
    <property type="entry name" value="DYNAMIN"/>
</dbReference>
<dbReference type="SMART" id="SM00053">
    <property type="entry name" value="DYNc"/>
    <property type="match status" value="1"/>
</dbReference>
<dbReference type="SMART" id="SM00302">
    <property type="entry name" value="GED"/>
    <property type="match status" value="1"/>
</dbReference>
<dbReference type="SUPFAM" id="SSF52540">
    <property type="entry name" value="P-loop containing nucleoside triphosphate hydrolases"/>
    <property type="match status" value="1"/>
</dbReference>
<dbReference type="PROSITE" id="PS00410">
    <property type="entry name" value="G_DYNAMIN_1"/>
    <property type="match status" value="1"/>
</dbReference>
<dbReference type="PROSITE" id="PS51718">
    <property type="entry name" value="G_DYNAMIN_2"/>
    <property type="match status" value="1"/>
</dbReference>
<dbReference type="PROSITE" id="PS51388">
    <property type="entry name" value="GED"/>
    <property type="match status" value="1"/>
</dbReference>
<accession>P18588</accession>
<sequence>MKERTSACRHGTPQKHPDTSEESQAMESVDNLCSQYEEKVRPCIDLIDSLRALGVEQDLALPAIAVIGDQSSGKSSVLEALSGVALPRGSGIVTRCPLVLKLKQLKQGEKWSGKVIYKDTEIEISHPSLVEREINKAQNLIAGEGLKISSDLISLEVSSPHVPDLTLIDLPGITRVAVGDQPADIEHKIKRLITEYIQKQETINLVVVPSNVDIATTEALKMAQEVDPQGDRTIGILTKPDLVDRGTEDKVVDVVRNLVCHLKKGYMIVKCRGQQDIQEQLSLAEALQKEQVFFKEHPQFRVLLEDGKATVPCLAKRLTMELTSHICKSLPILENQINVNHQIASEELQKYGADIPEDDSKRLSFLMNKINVFNKDILSLVQAQENISWEESRLFTKLRNEFLAWNDYIEEHFKKTLGSSEKHSQMEKFESHYRGRELPGFVDYKAFENIIKKEVKALEEPALNMLHRVTTMVKNAFTKVSSNNFGDFLNLHSTAKSKIEDIRFNQEKEAEKLIRLHFQMEHIVYCQDQAYKKALQEIREKEAEKEKSTFGAFQHNSPRKELTTTEMTQHLNAYYQECGRNIGRQIPLIIQYSILQTFGQEMEKAMLQLLQDTSKCNWFLTEQSDSREKKKFLKRRLLRLDEAQRKLAKFSN</sequence>
<name>MX1_RAT</name>
<comment type="function">
    <text evidence="1">Interferon-induced dynamin-like GTPase which has antiviral activity against influenza A virus, (IAV) and Thogoto virus (THOV). Inhibits IAV by interfering with the process of primary transcription, probably by affecting the viral polymerase function (By similarity).</text>
</comment>
<comment type="subunit">
    <text evidence="1">Homooligomer. Oligomerizes into multimeric filamentous or ring-like structures by virtue of its stalk domain. Oligomerization is critical for GTPase activity, protein stability, and recognition of viral target structures (By similarity). Interacts with TRPC1, TRPC3, TRPC4, TRPC5, TRPC6 and TRPC7 (By similarity). Interacts with HSPA5 (By similarity). Interacts with TUBB/TUBB5 (By similarity). Interacts with DDX39A and DDX39B (By similarity).</text>
</comment>
<comment type="subcellular location">
    <subcellularLocation>
        <location evidence="8">Nucleus</location>
    </subcellularLocation>
    <subcellularLocation>
        <location evidence="2">Cytoplasm</location>
    </subcellularLocation>
    <subcellularLocation>
        <location evidence="2">Endoplasmic reticulum membrane</location>
        <topology evidence="2">Peripheral membrane protein</topology>
        <orientation evidence="2">Cytoplasmic side</orientation>
    </subcellularLocation>
    <subcellularLocation>
        <location evidence="2">Cytoplasm</location>
        <location evidence="2">Perinuclear region</location>
    </subcellularLocation>
    <text evidence="2">Binds preferentially to negatively charged phospholipids.</text>
</comment>
<comment type="induction">
    <text evidence="7">By type I and type III interferons.</text>
</comment>
<comment type="domain">
    <text evidence="1">The C-terminal GTPase effector domain (GED) is involved in oligomerization and viral target recognition.</text>
</comment>
<comment type="domain">
    <text evidence="1">The middle domain mediates self-assembly and oligomerization.</text>
</comment>
<comment type="PTM">
    <text evidence="1">ISGylated.</text>
</comment>
<comment type="similarity">
    <text evidence="5">Belongs to the TRAFAC class dynamin-like GTPase superfamily. Dynamin/Fzo/YdjA family.</text>
</comment>
<organism>
    <name type="scientific">Rattus norvegicus</name>
    <name type="common">Rat</name>
    <dbReference type="NCBI Taxonomy" id="10116"/>
    <lineage>
        <taxon>Eukaryota</taxon>
        <taxon>Metazoa</taxon>
        <taxon>Chordata</taxon>
        <taxon>Craniata</taxon>
        <taxon>Vertebrata</taxon>
        <taxon>Euteleostomi</taxon>
        <taxon>Mammalia</taxon>
        <taxon>Eutheria</taxon>
        <taxon>Euarchontoglires</taxon>
        <taxon>Glires</taxon>
        <taxon>Rodentia</taxon>
        <taxon>Myomorpha</taxon>
        <taxon>Muroidea</taxon>
        <taxon>Muridae</taxon>
        <taxon>Murinae</taxon>
        <taxon>Rattus</taxon>
    </lineage>
</organism>
<evidence type="ECO:0000250" key="1"/>
<evidence type="ECO:0000250" key="2">
    <source>
        <dbReference type="UniProtKB" id="P20591"/>
    </source>
</evidence>
<evidence type="ECO:0000255" key="3"/>
<evidence type="ECO:0000255" key="4">
    <source>
        <dbReference type="PROSITE-ProRule" id="PRU00720"/>
    </source>
</evidence>
<evidence type="ECO:0000255" key="5">
    <source>
        <dbReference type="PROSITE-ProRule" id="PRU01055"/>
    </source>
</evidence>
<evidence type="ECO:0000256" key="6">
    <source>
        <dbReference type="SAM" id="MobiDB-lite"/>
    </source>
</evidence>
<evidence type="ECO:0000269" key="7">
    <source>
    </source>
</evidence>
<evidence type="ECO:0000269" key="8">
    <source>
    </source>
</evidence>
<feature type="chain" id="PRO_0000206595" description="Interferon-induced GTP-binding protein Mx1">
    <location>
        <begin position="1"/>
        <end position="652"/>
    </location>
</feature>
<feature type="domain" description="Dynamin-type G" evidence="5">
    <location>
        <begin position="58"/>
        <end position="331"/>
    </location>
</feature>
<feature type="domain" description="GED" evidence="4">
    <location>
        <begin position="564"/>
        <end position="652"/>
    </location>
</feature>
<feature type="region of interest" description="Disordered" evidence="6">
    <location>
        <begin position="1"/>
        <end position="27"/>
    </location>
</feature>
<feature type="region of interest" description="G1 motif" evidence="5">
    <location>
        <begin position="68"/>
        <end position="75"/>
    </location>
</feature>
<feature type="region of interest" description="G2 motif" evidence="5">
    <location>
        <begin position="93"/>
        <end position="95"/>
    </location>
</feature>
<feature type="region of interest" description="G3 motif" evidence="5">
    <location>
        <begin position="169"/>
        <end position="172"/>
    </location>
</feature>
<feature type="region of interest" description="G4 motif" evidence="5">
    <location>
        <begin position="238"/>
        <end position="241"/>
    </location>
</feature>
<feature type="region of interest" description="G5 motif" evidence="5">
    <location>
        <begin position="270"/>
        <end position="273"/>
    </location>
</feature>
<feature type="region of interest" description="Bundle signaling element (BSE)" evidence="1">
    <location>
        <begin position="332"/>
        <end position="357"/>
    </location>
</feature>
<feature type="region of interest" description="Middle domain" evidence="1">
    <location>
        <begin position="357"/>
        <end position="526"/>
    </location>
</feature>
<feature type="region of interest" description="Stalk" evidence="1">
    <location>
        <begin position="358"/>
        <end position="622"/>
    </location>
</feature>
<feature type="binding site" evidence="3">
    <location>
        <begin position="68"/>
        <end position="75"/>
    </location>
    <ligand>
        <name>GTP</name>
        <dbReference type="ChEBI" id="CHEBI:37565"/>
    </ligand>
</feature>
<feature type="binding site" evidence="3">
    <location>
        <begin position="169"/>
        <end position="173"/>
    </location>
    <ligand>
        <name>GTP</name>
        <dbReference type="ChEBI" id="CHEBI:37565"/>
    </ligand>
</feature>
<feature type="binding site" evidence="3">
    <location>
        <begin position="238"/>
        <end position="241"/>
    </location>
    <ligand>
        <name>GTP</name>
        <dbReference type="ChEBI" id="CHEBI:37565"/>
    </ligand>
</feature>
<protein>
    <recommendedName>
        <fullName>Interferon-induced GTP-binding protein Mx1</fullName>
    </recommendedName>
    <alternativeName>
        <fullName>Myxoma resistance protein 1</fullName>
    </alternativeName>
    <alternativeName>
        <fullName>Myxovirus resistance protein 1</fullName>
    </alternativeName>
</protein>
<gene>
    <name type="primary">Mx1</name>
</gene>